<accession>C0ZW55</accession>
<protein>
    <recommendedName>
        <fullName evidence="1">Large ribosomal subunit protein bL17</fullName>
    </recommendedName>
    <alternativeName>
        <fullName evidence="2">50S ribosomal protein L17</fullName>
    </alternativeName>
</protein>
<gene>
    <name evidence="1" type="primary">rplQ</name>
    <name type="ordered locus">RER_18820</name>
</gene>
<dbReference type="EMBL" id="AP008957">
    <property type="protein sequence ID" value="BAH32590.1"/>
    <property type="molecule type" value="Genomic_DNA"/>
</dbReference>
<dbReference type="RefSeq" id="WP_020906897.1">
    <property type="nucleotide sequence ID" value="NC_012490.1"/>
</dbReference>
<dbReference type="SMR" id="C0ZW55"/>
<dbReference type="GeneID" id="64139870"/>
<dbReference type="KEGG" id="rer:RER_18820"/>
<dbReference type="eggNOG" id="COG0203">
    <property type="taxonomic scope" value="Bacteria"/>
</dbReference>
<dbReference type="HOGENOM" id="CLU_074407_0_0_11"/>
<dbReference type="Proteomes" id="UP000002204">
    <property type="component" value="Chromosome"/>
</dbReference>
<dbReference type="GO" id="GO:0022625">
    <property type="term" value="C:cytosolic large ribosomal subunit"/>
    <property type="evidence" value="ECO:0007669"/>
    <property type="project" value="TreeGrafter"/>
</dbReference>
<dbReference type="GO" id="GO:0003735">
    <property type="term" value="F:structural constituent of ribosome"/>
    <property type="evidence" value="ECO:0007669"/>
    <property type="project" value="InterPro"/>
</dbReference>
<dbReference type="GO" id="GO:0006412">
    <property type="term" value="P:translation"/>
    <property type="evidence" value="ECO:0007669"/>
    <property type="project" value="UniProtKB-UniRule"/>
</dbReference>
<dbReference type="FunFam" id="3.90.1030.10:FF:000001">
    <property type="entry name" value="50S ribosomal protein L17"/>
    <property type="match status" value="1"/>
</dbReference>
<dbReference type="Gene3D" id="3.90.1030.10">
    <property type="entry name" value="Ribosomal protein L17"/>
    <property type="match status" value="1"/>
</dbReference>
<dbReference type="HAMAP" id="MF_01368">
    <property type="entry name" value="Ribosomal_bL17"/>
    <property type="match status" value="1"/>
</dbReference>
<dbReference type="InterPro" id="IPR000456">
    <property type="entry name" value="Ribosomal_bL17"/>
</dbReference>
<dbReference type="InterPro" id="IPR047859">
    <property type="entry name" value="Ribosomal_bL17_CS"/>
</dbReference>
<dbReference type="InterPro" id="IPR036373">
    <property type="entry name" value="Ribosomal_bL17_sf"/>
</dbReference>
<dbReference type="NCBIfam" id="TIGR00059">
    <property type="entry name" value="L17"/>
    <property type="match status" value="1"/>
</dbReference>
<dbReference type="PANTHER" id="PTHR14413:SF16">
    <property type="entry name" value="LARGE RIBOSOMAL SUBUNIT PROTEIN BL17M"/>
    <property type="match status" value="1"/>
</dbReference>
<dbReference type="PANTHER" id="PTHR14413">
    <property type="entry name" value="RIBOSOMAL PROTEIN L17"/>
    <property type="match status" value="1"/>
</dbReference>
<dbReference type="Pfam" id="PF01196">
    <property type="entry name" value="Ribosomal_L17"/>
    <property type="match status" value="1"/>
</dbReference>
<dbReference type="SUPFAM" id="SSF64263">
    <property type="entry name" value="Prokaryotic ribosomal protein L17"/>
    <property type="match status" value="1"/>
</dbReference>
<dbReference type="PROSITE" id="PS01167">
    <property type="entry name" value="RIBOSOMAL_L17"/>
    <property type="match status" value="1"/>
</dbReference>
<name>RL17_RHOE4</name>
<proteinExistence type="inferred from homology"/>
<reference key="1">
    <citation type="submission" date="2005-03" db="EMBL/GenBank/DDBJ databases">
        <title>Comparison of the complete genome sequences of Rhodococcus erythropolis PR4 and Rhodococcus opacus B4.</title>
        <authorList>
            <person name="Takarada H."/>
            <person name="Sekine M."/>
            <person name="Hosoyama A."/>
            <person name="Yamada R."/>
            <person name="Fujisawa T."/>
            <person name="Omata S."/>
            <person name="Shimizu A."/>
            <person name="Tsukatani N."/>
            <person name="Tanikawa S."/>
            <person name="Fujita N."/>
            <person name="Harayama S."/>
        </authorList>
    </citation>
    <scope>NUCLEOTIDE SEQUENCE [LARGE SCALE GENOMIC DNA]</scope>
    <source>
        <strain>PR4 / NBRC 100887</strain>
    </source>
</reference>
<keyword id="KW-0687">Ribonucleoprotein</keyword>
<keyword id="KW-0689">Ribosomal protein</keyword>
<organism>
    <name type="scientific">Rhodococcus erythropolis (strain PR4 / NBRC 100887)</name>
    <dbReference type="NCBI Taxonomy" id="234621"/>
    <lineage>
        <taxon>Bacteria</taxon>
        <taxon>Bacillati</taxon>
        <taxon>Actinomycetota</taxon>
        <taxon>Actinomycetes</taxon>
        <taxon>Mycobacteriales</taxon>
        <taxon>Nocardiaceae</taxon>
        <taxon>Rhodococcus</taxon>
        <taxon>Rhodococcus erythropolis group</taxon>
    </lineage>
</organism>
<sequence length="185" mass="20003">MPKPKKGARFGGSASHQKAIFANLATALFEHGRITTTESKAKALRPYAEKLVTHAKAGTLAHRREVLKVIRNKDVVHTLFAEIGPFYADRNGGYTRIIKTIPRKGDNAPMAIIELVKEKTVTSEADRARRVKSSQEAPAAENVVEAVEADATEAEVENADAVVEAIEDETATAADAPEAEEAKKD</sequence>
<evidence type="ECO:0000255" key="1">
    <source>
        <dbReference type="HAMAP-Rule" id="MF_01368"/>
    </source>
</evidence>
<evidence type="ECO:0000305" key="2"/>
<feature type="chain" id="PRO_1000215016" description="Large ribosomal subunit protein bL17">
    <location>
        <begin position="1"/>
        <end position="185"/>
    </location>
</feature>
<comment type="subunit">
    <text evidence="1">Part of the 50S ribosomal subunit. Contacts protein L32.</text>
</comment>
<comment type="similarity">
    <text evidence="1">Belongs to the bacterial ribosomal protein bL17 family.</text>
</comment>